<feature type="chain" id="PRO_0000095553" description="Ferric uptake regulation protein">
    <location>
        <begin position="1"/>
        <end position="149"/>
    </location>
</feature>
<feature type="region of interest" description="DNA-binding" evidence="1">
    <location>
        <begin position="1"/>
        <end position="87"/>
    </location>
</feature>
<feature type="region of interest" description="Dimerization" evidence="1">
    <location>
        <begin position="88"/>
        <end position="149"/>
    </location>
</feature>
<feature type="binding site" evidence="1">
    <location>
        <position position="36"/>
    </location>
    <ligand>
        <name>Zn(2+)</name>
        <dbReference type="ChEBI" id="CHEBI:29105"/>
    </ligand>
</feature>
<feature type="binding site" evidence="1">
    <location>
        <position position="84"/>
    </location>
    <ligand>
        <name>Zn(2+)</name>
        <dbReference type="ChEBI" id="CHEBI:29105"/>
    </ligand>
</feature>
<feature type="binding site" evidence="1">
    <location>
        <position position="90"/>
    </location>
    <ligand>
        <name>Fe cation</name>
        <dbReference type="ChEBI" id="CHEBI:24875"/>
    </ligand>
</feature>
<feature type="binding site" evidence="1">
    <location>
        <position position="92"/>
    </location>
    <ligand>
        <name>Fe cation</name>
        <dbReference type="ChEBI" id="CHEBI:24875"/>
    </ligand>
</feature>
<feature type="binding site" evidence="1">
    <location>
        <position position="93"/>
    </location>
    <ligand>
        <name>Zn(2+)</name>
        <dbReference type="ChEBI" id="CHEBI:29105"/>
    </ligand>
</feature>
<feature type="binding site" evidence="1">
    <location>
        <position position="96"/>
    </location>
    <ligand>
        <name>Zn(2+)</name>
        <dbReference type="ChEBI" id="CHEBI:29105"/>
    </ligand>
</feature>
<feature type="binding site" evidence="1">
    <location>
        <position position="99"/>
    </location>
    <ligand>
        <name>Zn(2+)</name>
        <dbReference type="ChEBI" id="CHEBI:29105"/>
    </ligand>
</feature>
<feature type="binding site" evidence="1">
    <location>
        <position position="104"/>
    </location>
    <ligand>
        <name>Zn(2+)</name>
        <dbReference type="ChEBI" id="CHEBI:29105"/>
    </ligand>
</feature>
<feature type="binding site" evidence="1">
    <location>
        <position position="111"/>
    </location>
    <ligand>
        <name>Fe cation</name>
        <dbReference type="ChEBI" id="CHEBI:24875"/>
    </ligand>
</feature>
<feature type="binding site" evidence="1">
    <location>
        <position position="128"/>
    </location>
    <ligand>
        <name>Fe cation</name>
        <dbReference type="ChEBI" id="CHEBI:24875"/>
    </ligand>
</feature>
<organism>
    <name type="scientific">Haemophilus ducreyi (strain 35000HP / ATCC 700724)</name>
    <dbReference type="NCBI Taxonomy" id="233412"/>
    <lineage>
        <taxon>Bacteria</taxon>
        <taxon>Pseudomonadati</taxon>
        <taxon>Pseudomonadota</taxon>
        <taxon>Gammaproteobacteria</taxon>
        <taxon>Pasteurellales</taxon>
        <taxon>Pasteurellaceae</taxon>
        <taxon>Haemophilus</taxon>
    </lineage>
</organism>
<keyword id="KW-0963">Cytoplasm</keyword>
<keyword id="KW-0238">DNA-binding</keyword>
<keyword id="KW-0408">Iron</keyword>
<keyword id="KW-0479">Metal-binding</keyword>
<keyword id="KW-1185">Reference proteome</keyword>
<keyword id="KW-0678">Repressor</keyword>
<keyword id="KW-0804">Transcription</keyword>
<keyword id="KW-0805">Transcription regulation</keyword>
<keyword id="KW-0862">Zinc</keyword>
<evidence type="ECO:0000250" key="1"/>
<evidence type="ECO:0000305" key="2"/>
<gene>
    <name type="primary">fur</name>
    <name type="ordered locus">HD_0367</name>
</gene>
<name>FUR_HAEDU</name>
<dbReference type="EMBL" id="U37224">
    <property type="protein sequence ID" value="AAC44583.1"/>
    <property type="molecule type" value="Genomic_DNA"/>
</dbReference>
<dbReference type="EMBL" id="AE017143">
    <property type="protein sequence ID" value="AAP95338.1"/>
    <property type="molecule type" value="Genomic_DNA"/>
</dbReference>
<dbReference type="PIR" id="JC5097">
    <property type="entry name" value="JC5097"/>
</dbReference>
<dbReference type="RefSeq" id="WP_010944391.1">
    <property type="nucleotide sequence ID" value="NC_002940.2"/>
</dbReference>
<dbReference type="SMR" id="P71333"/>
<dbReference type="STRING" id="233412.HD_0367"/>
<dbReference type="KEGG" id="hdu:HD_0367"/>
<dbReference type="eggNOG" id="COG0735">
    <property type="taxonomic scope" value="Bacteria"/>
</dbReference>
<dbReference type="HOGENOM" id="CLU_096072_3_3_6"/>
<dbReference type="OrthoDB" id="8659436at2"/>
<dbReference type="Proteomes" id="UP000001022">
    <property type="component" value="Chromosome"/>
</dbReference>
<dbReference type="GO" id="GO:0005829">
    <property type="term" value="C:cytosol"/>
    <property type="evidence" value="ECO:0007669"/>
    <property type="project" value="TreeGrafter"/>
</dbReference>
<dbReference type="GO" id="GO:0003700">
    <property type="term" value="F:DNA-binding transcription factor activity"/>
    <property type="evidence" value="ECO:0007669"/>
    <property type="project" value="InterPro"/>
</dbReference>
<dbReference type="GO" id="GO:0000976">
    <property type="term" value="F:transcription cis-regulatory region binding"/>
    <property type="evidence" value="ECO:0007669"/>
    <property type="project" value="TreeGrafter"/>
</dbReference>
<dbReference type="GO" id="GO:0008270">
    <property type="term" value="F:zinc ion binding"/>
    <property type="evidence" value="ECO:0007669"/>
    <property type="project" value="TreeGrafter"/>
</dbReference>
<dbReference type="GO" id="GO:0045892">
    <property type="term" value="P:negative regulation of DNA-templated transcription"/>
    <property type="evidence" value="ECO:0007669"/>
    <property type="project" value="TreeGrafter"/>
</dbReference>
<dbReference type="GO" id="GO:1900705">
    <property type="term" value="P:negative regulation of siderophore biosynthetic process"/>
    <property type="evidence" value="ECO:0007669"/>
    <property type="project" value="TreeGrafter"/>
</dbReference>
<dbReference type="CDD" id="cd07153">
    <property type="entry name" value="Fur_like"/>
    <property type="match status" value="1"/>
</dbReference>
<dbReference type="FunFam" id="1.10.10.10:FF:000007">
    <property type="entry name" value="Ferric uptake regulation protein"/>
    <property type="match status" value="1"/>
</dbReference>
<dbReference type="FunFam" id="3.30.1490.190:FF:000001">
    <property type="entry name" value="Ferric uptake regulation protein"/>
    <property type="match status" value="1"/>
</dbReference>
<dbReference type="Gene3D" id="3.30.1490.190">
    <property type="match status" value="1"/>
</dbReference>
<dbReference type="Gene3D" id="1.10.10.10">
    <property type="entry name" value="Winged helix-like DNA-binding domain superfamily/Winged helix DNA-binding domain"/>
    <property type="match status" value="1"/>
</dbReference>
<dbReference type="InterPro" id="IPR002481">
    <property type="entry name" value="FUR"/>
</dbReference>
<dbReference type="InterPro" id="IPR043135">
    <property type="entry name" value="Fur_C"/>
</dbReference>
<dbReference type="InterPro" id="IPR036388">
    <property type="entry name" value="WH-like_DNA-bd_sf"/>
</dbReference>
<dbReference type="InterPro" id="IPR036390">
    <property type="entry name" value="WH_DNA-bd_sf"/>
</dbReference>
<dbReference type="NCBIfam" id="NF006999">
    <property type="entry name" value="PRK09462.1"/>
    <property type="match status" value="1"/>
</dbReference>
<dbReference type="PANTHER" id="PTHR33202:SF2">
    <property type="entry name" value="FERRIC UPTAKE REGULATION PROTEIN"/>
    <property type="match status" value="1"/>
</dbReference>
<dbReference type="PANTHER" id="PTHR33202">
    <property type="entry name" value="ZINC UPTAKE REGULATION PROTEIN"/>
    <property type="match status" value="1"/>
</dbReference>
<dbReference type="Pfam" id="PF01475">
    <property type="entry name" value="FUR"/>
    <property type="match status" value="1"/>
</dbReference>
<dbReference type="SUPFAM" id="SSF46785">
    <property type="entry name" value="Winged helix' DNA-binding domain"/>
    <property type="match status" value="1"/>
</dbReference>
<protein>
    <recommendedName>
        <fullName>Ferric uptake regulation protein</fullName>
        <shortName>Ferric uptake regulator</shortName>
    </recommendedName>
</protein>
<comment type="function">
    <text evidence="1">Acts as a global negative controlling element, employing Fe(2+) as a cofactor to bind the operator of the repressed genes.</text>
</comment>
<comment type="subunit">
    <text evidence="1">Homodimer.</text>
</comment>
<comment type="subcellular location">
    <subcellularLocation>
        <location evidence="1">Cytoplasm</location>
    </subcellularLocation>
</comment>
<comment type="similarity">
    <text evidence="2">Belongs to the Fur family.</text>
</comment>
<reference key="1">
    <citation type="journal article" date="1996" name="Gene">
        <title>Cloning and sequencing of a Haemophilus ducreyi fur homolog.</title>
        <authorList>
            <person name="Carson S.D.B."/>
            <person name="Thomas C.E."/>
            <person name="Elkins C.E."/>
        </authorList>
    </citation>
    <scope>NUCLEOTIDE SEQUENCE [GENOMIC DNA]</scope>
    <source>
        <strain>35000HP / ATCC 700724</strain>
    </source>
</reference>
<reference key="2">
    <citation type="submission" date="2003-06" db="EMBL/GenBank/DDBJ databases">
        <title>The complete genome sequence of Haemophilus ducreyi.</title>
        <authorList>
            <person name="Munson R.S. Jr."/>
            <person name="Ray W.C."/>
            <person name="Mahairas G."/>
            <person name="Sabo P."/>
            <person name="Mungur R."/>
            <person name="Johnson L."/>
            <person name="Nguyen D."/>
            <person name="Wang J."/>
            <person name="Forst C."/>
            <person name="Hood L."/>
        </authorList>
    </citation>
    <scope>NUCLEOTIDE SEQUENCE [LARGE SCALE GENOMIC DNA]</scope>
    <source>
        <strain>35000HP / ATCC 700724</strain>
    </source>
</reference>
<accession>P71333</accession>
<sequence>MSEENTKLLKSVGLKVTEPRLTILALMQQYREEMQHFSAEDIYKLLLEQSSDIGLATVYRVLNQFEEVGILLRHNFDSNKAVFELNVDHEHDHIICMDCGKVFEFKDPDIERRQREISEQHGMKLATHSLYLYAKCSDISHCDSKDKKD</sequence>
<proteinExistence type="inferred from homology"/>